<dbReference type="EC" id="3.1.-.-"/>
<dbReference type="EMBL" id="Y11778">
    <property type="protein sequence ID" value="CAA72452.1"/>
    <property type="molecule type" value="Genomic_DNA"/>
</dbReference>
<dbReference type="EMBL" id="AJ235273">
    <property type="protein sequence ID" value="CAA15172.1"/>
    <property type="molecule type" value="Genomic_DNA"/>
</dbReference>
<dbReference type="PIR" id="D71634">
    <property type="entry name" value="D71634"/>
</dbReference>
<dbReference type="RefSeq" id="NP_221096.1">
    <property type="nucleotide sequence ID" value="NC_000963.1"/>
</dbReference>
<dbReference type="RefSeq" id="WP_004597014.1">
    <property type="nucleotide sequence ID" value="NC_000963.1"/>
</dbReference>
<dbReference type="SMR" id="O05958"/>
<dbReference type="STRING" id="272947.gene:17555814"/>
<dbReference type="ESTHER" id="ricpr-y744">
    <property type="family name" value="LYsophospholipase_carboxylesterase"/>
</dbReference>
<dbReference type="EnsemblBacteria" id="CAA15172">
    <property type="protein sequence ID" value="CAA15172"/>
    <property type="gene ID" value="CAA15172"/>
</dbReference>
<dbReference type="KEGG" id="rpr:RP744"/>
<dbReference type="PATRIC" id="fig|272947.5.peg.777"/>
<dbReference type="eggNOG" id="COG0400">
    <property type="taxonomic scope" value="Bacteria"/>
</dbReference>
<dbReference type="HOGENOM" id="CLU_049413_5_2_5"/>
<dbReference type="OrthoDB" id="9801763at2"/>
<dbReference type="Proteomes" id="UP000002480">
    <property type="component" value="Chromosome"/>
</dbReference>
<dbReference type="GO" id="GO:0016787">
    <property type="term" value="F:hydrolase activity"/>
    <property type="evidence" value="ECO:0007669"/>
    <property type="project" value="UniProtKB-KW"/>
</dbReference>
<dbReference type="Gene3D" id="3.40.50.1820">
    <property type="entry name" value="alpha/beta hydrolase"/>
    <property type="match status" value="1"/>
</dbReference>
<dbReference type="InterPro" id="IPR029058">
    <property type="entry name" value="AB_hydrolase_fold"/>
</dbReference>
<dbReference type="InterPro" id="IPR050565">
    <property type="entry name" value="LYPA1-2/EST-like"/>
</dbReference>
<dbReference type="InterPro" id="IPR003140">
    <property type="entry name" value="PLipase/COase/thioEstase"/>
</dbReference>
<dbReference type="PANTHER" id="PTHR10655:SF17">
    <property type="entry name" value="LYSOPHOSPHOLIPASE-LIKE PROTEIN 1"/>
    <property type="match status" value="1"/>
</dbReference>
<dbReference type="PANTHER" id="PTHR10655">
    <property type="entry name" value="LYSOPHOSPHOLIPASE-RELATED"/>
    <property type="match status" value="1"/>
</dbReference>
<dbReference type="Pfam" id="PF02230">
    <property type="entry name" value="Abhydrolase_2"/>
    <property type="match status" value="1"/>
</dbReference>
<dbReference type="SUPFAM" id="SSF53474">
    <property type="entry name" value="alpha/beta-Hydrolases"/>
    <property type="match status" value="1"/>
</dbReference>
<reference key="1">
    <citation type="journal article" date="1997" name="Microbiology">
        <title>Genomic rearrangements during evolution of the obligate intracellular parasite Rickettsia prowazekii as inferred from an analysis of 52015 bp nucleotide sequence.</title>
        <authorList>
            <person name="Andersson J.O."/>
            <person name="Andersson S.G.E."/>
        </authorList>
    </citation>
    <scope>NUCLEOTIDE SEQUENCE [GENOMIC DNA]</scope>
    <source>
        <strain>Madrid E</strain>
    </source>
</reference>
<reference key="2">
    <citation type="journal article" date="1998" name="Nature">
        <title>The genome sequence of Rickettsia prowazekii and the origin of mitochondria.</title>
        <authorList>
            <person name="Andersson S.G.E."/>
            <person name="Zomorodipour A."/>
            <person name="Andersson J.O."/>
            <person name="Sicheritz-Ponten T."/>
            <person name="Alsmark U.C.M."/>
            <person name="Podowski R.M."/>
            <person name="Naeslund A.K."/>
            <person name="Eriksson A.-S."/>
            <person name="Winkler H.H."/>
            <person name="Kurland C.G."/>
        </authorList>
    </citation>
    <scope>NUCLEOTIDE SEQUENCE [LARGE SCALE GENOMIC DNA]</scope>
    <source>
        <strain>Madrid E</strain>
    </source>
</reference>
<feature type="chain" id="PRO_0000102278" description="Uncharacterized hydrolase RP744">
    <location>
        <begin position="1"/>
        <end position="215"/>
    </location>
</feature>
<feature type="active site" description="Charge relay system" evidence="1">
    <location>
        <position position="114"/>
    </location>
</feature>
<feature type="active site" description="Charge relay system" evidence="1">
    <location>
        <position position="162"/>
    </location>
</feature>
<feature type="active site" description="Charge relay system" evidence="1">
    <location>
        <position position="194"/>
    </location>
</feature>
<organism>
    <name type="scientific">Rickettsia prowazekii (strain Madrid E)</name>
    <dbReference type="NCBI Taxonomy" id="272947"/>
    <lineage>
        <taxon>Bacteria</taxon>
        <taxon>Pseudomonadati</taxon>
        <taxon>Pseudomonadota</taxon>
        <taxon>Alphaproteobacteria</taxon>
        <taxon>Rickettsiales</taxon>
        <taxon>Rickettsiaceae</taxon>
        <taxon>Rickettsieae</taxon>
        <taxon>Rickettsia</taxon>
        <taxon>typhus group</taxon>
    </lineage>
</organism>
<evidence type="ECO:0000250" key="1"/>
<evidence type="ECO:0000305" key="2"/>
<proteinExistence type="inferred from homology"/>
<accession>O05958</accession>
<protein>
    <recommendedName>
        <fullName>Uncharacterized hydrolase RP744</fullName>
        <ecNumber>3.1.-.-</ecNumber>
    </recommendedName>
</protein>
<sequence>MNKYLEYPEVESKELPPQKLVVLLHGVGSDGHDLIGLVPYIKNDLPNCHFISPHGIEDYDMMPYGRQWFSLRDRSPHIIAKLIANNISKLEDIIREKQTELNLTNKDTVIIGFSQGTIIGLYLTLIQQKPLFCTIGFSGALIPPMKVNNKLTPICLIHGELDQVINVSEMYNASNYLSKLNIEHSGHKLTSLAHSIDGRGLEIAINFINTCHNIV</sequence>
<comment type="similarity">
    <text evidence="2">Belongs to the AB hydrolase superfamily. AB hydrolase 2 family.</text>
</comment>
<keyword id="KW-0378">Hydrolase</keyword>
<keyword id="KW-1185">Reference proteome</keyword>
<gene>
    <name type="ordered locus">RP744</name>
</gene>
<name>Y744_RICPR</name>